<reference key="1">
    <citation type="journal article" date="2009" name="J. Bacteriol.">
        <title>Complete genome sequence of Rhodobacter sphaeroides KD131.</title>
        <authorList>
            <person name="Lim S.-K."/>
            <person name="Kim S.J."/>
            <person name="Cha S.H."/>
            <person name="Oh Y.-K."/>
            <person name="Rhee H.-J."/>
            <person name="Kim M.-S."/>
            <person name="Lee J.K."/>
        </authorList>
    </citation>
    <scope>NUCLEOTIDE SEQUENCE [LARGE SCALE GENOMIC DNA]</scope>
    <source>
        <strain>KD131 / KCTC 12085</strain>
    </source>
</reference>
<sequence>MTAPKPVVLCILDGWGLRAEREANAVALADTPTFDRLMATCPNATLVTHGPDVGLPRGQMGNSEVGHTNIGAGRVVAMDLGAIDLAIEEGSFPQNPALRDFIAKVKANGGTAHLMGVVSDGGVHGHIQHLISAVEVLAGEGIPVVIHAITDGRDVAPTSAGEFVGQLVRVLPEVARVGTVIGRYWAMDRDKRWDRVKRASDAMLHATGEHAPDAEAAVAAALARGETDEFIAPTVVGDYAGARDGDGFFCLNFRADRAREILAGLGQPGFDSYDTGTRPDWSAFLGMVDYSKEHDRFMTAAYPKPVIRNTLGEWVASHGLRQFRIAETEKYPHVTFFLNGGREAPETGEDRYMANSPKVATYDLQPEMSAPDVSDHLVEAIGAGYDLIVVNYANPDMVGHTGDLKAAMAAVEEVDRGLGRAVEAVTTAGGAMIVTADHGNCETMVDPETGGPHTAHTTNPVPVILVNGPAGARLHAGRLADLAPTLLQLMQLPQPEEMTGRSLIDA</sequence>
<protein>
    <recommendedName>
        <fullName evidence="1">2,3-bisphosphoglycerate-independent phosphoglycerate mutase</fullName>
        <shortName evidence="1">BPG-independent PGAM</shortName>
        <shortName evidence="1">Phosphoglyceromutase</shortName>
        <shortName evidence="1">iPGM</shortName>
        <ecNumber evidence="1">5.4.2.12</ecNumber>
    </recommendedName>
</protein>
<organism>
    <name type="scientific">Cereibacter sphaeroides (strain KD131 / KCTC 12085)</name>
    <name type="common">Rhodobacter sphaeroides</name>
    <dbReference type="NCBI Taxonomy" id="557760"/>
    <lineage>
        <taxon>Bacteria</taxon>
        <taxon>Pseudomonadati</taxon>
        <taxon>Pseudomonadota</taxon>
        <taxon>Alphaproteobacteria</taxon>
        <taxon>Rhodobacterales</taxon>
        <taxon>Paracoccaceae</taxon>
        <taxon>Cereibacter</taxon>
    </lineage>
</organism>
<name>GPMI_CERSK</name>
<gene>
    <name evidence="1" type="primary">gpmI</name>
    <name type="ordered locus">RSKD131_2308</name>
</gene>
<keyword id="KW-0324">Glycolysis</keyword>
<keyword id="KW-0413">Isomerase</keyword>
<keyword id="KW-0464">Manganese</keyword>
<keyword id="KW-0479">Metal-binding</keyword>
<feature type="chain" id="PRO_1000149490" description="2,3-bisphosphoglycerate-independent phosphoglycerate mutase">
    <location>
        <begin position="1"/>
        <end position="506"/>
    </location>
</feature>
<feature type="active site" description="Phosphoserine intermediate" evidence="1">
    <location>
        <position position="63"/>
    </location>
</feature>
<feature type="binding site" evidence="1">
    <location>
        <position position="13"/>
    </location>
    <ligand>
        <name>Mn(2+)</name>
        <dbReference type="ChEBI" id="CHEBI:29035"/>
        <label>2</label>
    </ligand>
</feature>
<feature type="binding site" evidence="1">
    <location>
        <position position="63"/>
    </location>
    <ligand>
        <name>Mn(2+)</name>
        <dbReference type="ChEBI" id="CHEBI:29035"/>
        <label>2</label>
    </ligand>
</feature>
<feature type="binding site" evidence="1">
    <location>
        <position position="124"/>
    </location>
    <ligand>
        <name>substrate</name>
    </ligand>
</feature>
<feature type="binding site" evidence="1">
    <location>
        <begin position="153"/>
        <end position="154"/>
    </location>
    <ligand>
        <name>substrate</name>
    </ligand>
</feature>
<feature type="binding site" evidence="1">
    <location>
        <position position="183"/>
    </location>
    <ligand>
        <name>substrate</name>
    </ligand>
</feature>
<feature type="binding site" evidence="1">
    <location>
        <position position="189"/>
    </location>
    <ligand>
        <name>substrate</name>
    </ligand>
</feature>
<feature type="binding site" evidence="1">
    <location>
        <begin position="254"/>
        <end position="257"/>
    </location>
    <ligand>
        <name>substrate</name>
    </ligand>
</feature>
<feature type="binding site" evidence="1">
    <location>
        <position position="330"/>
    </location>
    <ligand>
        <name>substrate</name>
    </ligand>
</feature>
<feature type="binding site" evidence="1">
    <location>
        <position position="396"/>
    </location>
    <ligand>
        <name>Mn(2+)</name>
        <dbReference type="ChEBI" id="CHEBI:29035"/>
        <label>1</label>
    </ligand>
</feature>
<feature type="binding site" evidence="1">
    <location>
        <position position="400"/>
    </location>
    <ligand>
        <name>Mn(2+)</name>
        <dbReference type="ChEBI" id="CHEBI:29035"/>
        <label>1</label>
    </ligand>
</feature>
<feature type="binding site" evidence="1">
    <location>
        <position position="437"/>
    </location>
    <ligand>
        <name>Mn(2+)</name>
        <dbReference type="ChEBI" id="CHEBI:29035"/>
        <label>2</label>
    </ligand>
</feature>
<feature type="binding site" evidence="1">
    <location>
        <position position="438"/>
    </location>
    <ligand>
        <name>Mn(2+)</name>
        <dbReference type="ChEBI" id="CHEBI:29035"/>
        <label>2</label>
    </ligand>
</feature>
<feature type="binding site" evidence="1">
    <location>
        <position position="456"/>
    </location>
    <ligand>
        <name>Mn(2+)</name>
        <dbReference type="ChEBI" id="CHEBI:29035"/>
        <label>1</label>
    </ligand>
</feature>
<accession>B9KN62</accession>
<dbReference type="EC" id="5.4.2.12" evidence="1"/>
<dbReference type="EMBL" id="CP001150">
    <property type="protein sequence ID" value="ACM02168.1"/>
    <property type="molecule type" value="Genomic_DNA"/>
</dbReference>
<dbReference type="RefSeq" id="WP_015921334.1">
    <property type="nucleotide sequence ID" value="NC_011963.1"/>
</dbReference>
<dbReference type="SMR" id="B9KN62"/>
<dbReference type="GeneID" id="67447689"/>
<dbReference type="KEGG" id="rsk:RSKD131_2308"/>
<dbReference type="HOGENOM" id="CLU_026099_2_0_5"/>
<dbReference type="UniPathway" id="UPA00109">
    <property type="reaction ID" value="UER00186"/>
</dbReference>
<dbReference type="GO" id="GO:0005829">
    <property type="term" value="C:cytosol"/>
    <property type="evidence" value="ECO:0007669"/>
    <property type="project" value="TreeGrafter"/>
</dbReference>
<dbReference type="GO" id="GO:0030145">
    <property type="term" value="F:manganese ion binding"/>
    <property type="evidence" value="ECO:0007669"/>
    <property type="project" value="UniProtKB-UniRule"/>
</dbReference>
<dbReference type="GO" id="GO:0004619">
    <property type="term" value="F:phosphoglycerate mutase activity"/>
    <property type="evidence" value="ECO:0007669"/>
    <property type="project" value="UniProtKB-EC"/>
</dbReference>
<dbReference type="GO" id="GO:0006007">
    <property type="term" value="P:glucose catabolic process"/>
    <property type="evidence" value="ECO:0007669"/>
    <property type="project" value="InterPro"/>
</dbReference>
<dbReference type="GO" id="GO:0006096">
    <property type="term" value="P:glycolytic process"/>
    <property type="evidence" value="ECO:0007669"/>
    <property type="project" value="UniProtKB-UniRule"/>
</dbReference>
<dbReference type="CDD" id="cd16010">
    <property type="entry name" value="iPGM"/>
    <property type="match status" value="1"/>
</dbReference>
<dbReference type="FunFam" id="3.40.1450.10:FF:000002">
    <property type="entry name" value="2,3-bisphosphoglycerate-independent phosphoglycerate mutase"/>
    <property type="match status" value="1"/>
</dbReference>
<dbReference type="Gene3D" id="3.40.720.10">
    <property type="entry name" value="Alkaline Phosphatase, subunit A"/>
    <property type="match status" value="1"/>
</dbReference>
<dbReference type="Gene3D" id="3.40.1450.10">
    <property type="entry name" value="BPG-independent phosphoglycerate mutase, domain B"/>
    <property type="match status" value="1"/>
</dbReference>
<dbReference type="HAMAP" id="MF_01038">
    <property type="entry name" value="GpmI"/>
    <property type="match status" value="1"/>
</dbReference>
<dbReference type="InterPro" id="IPR017850">
    <property type="entry name" value="Alkaline_phosphatase_core_sf"/>
</dbReference>
<dbReference type="InterPro" id="IPR011258">
    <property type="entry name" value="BPG-indep_PGM_N"/>
</dbReference>
<dbReference type="InterPro" id="IPR006124">
    <property type="entry name" value="Metalloenzyme"/>
</dbReference>
<dbReference type="InterPro" id="IPR036646">
    <property type="entry name" value="PGAM_B_sf"/>
</dbReference>
<dbReference type="InterPro" id="IPR005995">
    <property type="entry name" value="Pgm_bpd_ind"/>
</dbReference>
<dbReference type="NCBIfam" id="TIGR01307">
    <property type="entry name" value="pgm_bpd_ind"/>
    <property type="match status" value="1"/>
</dbReference>
<dbReference type="PANTHER" id="PTHR31637">
    <property type="entry name" value="2,3-BISPHOSPHOGLYCERATE-INDEPENDENT PHOSPHOGLYCERATE MUTASE"/>
    <property type="match status" value="1"/>
</dbReference>
<dbReference type="PANTHER" id="PTHR31637:SF0">
    <property type="entry name" value="2,3-BISPHOSPHOGLYCERATE-INDEPENDENT PHOSPHOGLYCERATE MUTASE"/>
    <property type="match status" value="1"/>
</dbReference>
<dbReference type="Pfam" id="PF06415">
    <property type="entry name" value="iPGM_N"/>
    <property type="match status" value="1"/>
</dbReference>
<dbReference type="Pfam" id="PF01676">
    <property type="entry name" value="Metalloenzyme"/>
    <property type="match status" value="1"/>
</dbReference>
<dbReference type="PIRSF" id="PIRSF001492">
    <property type="entry name" value="IPGAM"/>
    <property type="match status" value="1"/>
</dbReference>
<dbReference type="SUPFAM" id="SSF64158">
    <property type="entry name" value="2,3-Bisphosphoglycerate-independent phosphoglycerate mutase, substrate-binding domain"/>
    <property type="match status" value="1"/>
</dbReference>
<dbReference type="SUPFAM" id="SSF53649">
    <property type="entry name" value="Alkaline phosphatase-like"/>
    <property type="match status" value="1"/>
</dbReference>
<evidence type="ECO:0000255" key="1">
    <source>
        <dbReference type="HAMAP-Rule" id="MF_01038"/>
    </source>
</evidence>
<comment type="function">
    <text evidence="1">Catalyzes the interconversion of 2-phosphoglycerate and 3-phosphoglycerate.</text>
</comment>
<comment type="catalytic activity">
    <reaction evidence="1">
        <text>(2R)-2-phosphoglycerate = (2R)-3-phosphoglycerate</text>
        <dbReference type="Rhea" id="RHEA:15901"/>
        <dbReference type="ChEBI" id="CHEBI:58272"/>
        <dbReference type="ChEBI" id="CHEBI:58289"/>
        <dbReference type="EC" id="5.4.2.12"/>
    </reaction>
</comment>
<comment type="cofactor">
    <cofactor evidence="1">
        <name>Mn(2+)</name>
        <dbReference type="ChEBI" id="CHEBI:29035"/>
    </cofactor>
    <text evidence="1">Binds 2 manganese ions per subunit.</text>
</comment>
<comment type="pathway">
    <text evidence="1">Carbohydrate degradation; glycolysis; pyruvate from D-glyceraldehyde 3-phosphate: step 3/5.</text>
</comment>
<comment type="subunit">
    <text evidence="1">Monomer.</text>
</comment>
<comment type="similarity">
    <text evidence="1">Belongs to the BPG-independent phosphoglycerate mutase family.</text>
</comment>
<proteinExistence type="inferred from homology"/>